<accession>A9L2I0</accession>
<organism>
    <name type="scientific">Shewanella baltica (strain OS195)</name>
    <dbReference type="NCBI Taxonomy" id="399599"/>
    <lineage>
        <taxon>Bacteria</taxon>
        <taxon>Pseudomonadati</taxon>
        <taxon>Pseudomonadota</taxon>
        <taxon>Gammaproteobacteria</taxon>
        <taxon>Alteromonadales</taxon>
        <taxon>Shewanellaceae</taxon>
        <taxon>Shewanella</taxon>
    </lineage>
</organism>
<evidence type="ECO:0000255" key="1">
    <source>
        <dbReference type="HAMAP-Rule" id="MF_00095"/>
    </source>
</evidence>
<feature type="chain" id="PRO_1000075546" description="Sugar fermentation stimulation protein homolog">
    <location>
        <begin position="1"/>
        <end position="234"/>
    </location>
</feature>
<name>SFSA_SHEB9</name>
<gene>
    <name evidence="1" type="primary">sfsA</name>
    <name type="ordered locus">Sbal195_0885</name>
</gene>
<proteinExistence type="inferred from homology"/>
<comment type="similarity">
    <text evidence="1">Belongs to the SfsA family.</text>
</comment>
<dbReference type="EMBL" id="CP000891">
    <property type="protein sequence ID" value="ABX48062.1"/>
    <property type="molecule type" value="Genomic_DNA"/>
</dbReference>
<dbReference type="RefSeq" id="WP_012196713.1">
    <property type="nucleotide sequence ID" value="NC_009997.1"/>
</dbReference>
<dbReference type="SMR" id="A9L2I0"/>
<dbReference type="GeneID" id="11771189"/>
<dbReference type="KEGG" id="sbn:Sbal195_0885"/>
<dbReference type="HOGENOM" id="CLU_052299_2_0_6"/>
<dbReference type="Proteomes" id="UP000000770">
    <property type="component" value="Chromosome"/>
</dbReference>
<dbReference type="GO" id="GO:0003677">
    <property type="term" value="F:DNA binding"/>
    <property type="evidence" value="ECO:0007669"/>
    <property type="project" value="InterPro"/>
</dbReference>
<dbReference type="CDD" id="cd22359">
    <property type="entry name" value="SfsA-like_bacterial"/>
    <property type="match status" value="1"/>
</dbReference>
<dbReference type="FunFam" id="2.40.50.580:FF:000001">
    <property type="entry name" value="Sugar fermentation stimulation protein A"/>
    <property type="match status" value="1"/>
</dbReference>
<dbReference type="FunFam" id="3.40.1350.60:FF:000001">
    <property type="entry name" value="Sugar fermentation stimulation protein A"/>
    <property type="match status" value="1"/>
</dbReference>
<dbReference type="Gene3D" id="2.40.50.580">
    <property type="match status" value="1"/>
</dbReference>
<dbReference type="Gene3D" id="3.40.1350.60">
    <property type="match status" value="1"/>
</dbReference>
<dbReference type="HAMAP" id="MF_00095">
    <property type="entry name" value="SfsA"/>
    <property type="match status" value="1"/>
</dbReference>
<dbReference type="InterPro" id="IPR005224">
    <property type="entry name" value="SfsA"/>
</dbReference>
<dbReference type="InterPro" id="IPR040452">
    <property type="entry name" value="SfsA_C"/>
</dbReference>
<dbReference type="InterPro" id="IPR041465">
    <property type="entry name" value="SfsA_N"/>
</dbReference>
<dbReference type="NCBIfam" id="TIGR00230">
    <property type="entry name" value="sfsA"/>
    <property type="match status" value="1"/>
</dbReference>
<dbReference type="PANTHER" id="PTHR30545">
    <property type="entry name" value="SUGAR FERMENTATION STIMULATION PROTEIN A"/>
    <property type="match status" value="1"/>
</dbReference>
<dbReference type="PANTHER" id="PTHR30545:SF2">
    <property type="entry name" value="SUGAR FERMENTATION STIMULATION PROTEIN A"/>
    <property type="match status" value="1"/>
</dbReference>
<dbReference type="Pfam" id="PF03749">
    <property type="entry name" value="SfsA"/>
    <property type="match status" value="1"/>
</dbReference>
<dbReference type="Pfam" id="PF17746">
    <property type="entry name" value="SfsA_N"/>
    <property type="match status" value="1"/>
</dbReference>
<reference key="1">
    <citation type="submission" date="2007-11" db="EMBL/GenBank/DDBJ databases">
        <title>Complete sequence of chromosome of Shewanella baltica OS195.</title>
        <authorList>
            <consortium name="US DOE Joint Genome Institute"/>
            <person name="Copeland A."/>
            <person name="Lucas S."/>
            <person name="Lapidus A."/>
            <person name="Barry K."/>
            <person name="Glavina del Rio T."/>
            <person name="Dalin E."/>
            <person name="Tice H."/>
            <person name="Pitluck S."/>
            <person name="Chain P."/>
            <person name="Malfatti S."/>
            <person name="Shin M."/>
            <person name="Vergez L."/>
            <person name="Schmutz J."/>
            <person name="Larimer F."/>
            <person name="Land M."/>
            <person name="Hauser L."/>
            <person name="Kyrpides N."/>
            <person name="Kim E."/>
            <person name="Brettar I."/>
            <person name="Rodrigues J."/>
            <person name="Konstantinidis K."/>
            <person name="Klappenbach J."/>
            <person name="Hofle M."/>
            <person name="Tiedje J."/>
            <person name="Richardson P."/>
        </authorList>
    </citation>
    <scope>NUCLEOTIDE SEQUENCE [LARGE SCALE GENOMIC DNA]</scope>
    <source>
        <strain>OS195</strain>
    </source>
</reference>
<sequence>MEFTPPLQQGILLRRYKRFLADVQLSDGSEITLHCPNTGSMRNCLYPGETVWFSTSDNPKRKYAHTWELMTTPNAGLIGIHSGQANTLAEEAINKGIITELTGYDSLSREVKYGDENSRIDILLQGAQKPACYIEVKSCTLLEDGQGYFPDAVSLRGQKHLRELMHMVSQGHRAVLLFVVQHSEIFSVAPAAHIDPEYAKLLKIAVLAGVEVLAYRCEMSPTEIHLAQACDVRV</sequence>
<protein>
    <recommendedName>
        <fullName evidence="1">Sugar fermentation stimulation protein homolog</fullName>
    </recommendedName>
</protein>